<feature type="chain" id="PRO_1000212551" description="Probable Fe(2+)-trafficking protein">
    <location>
        <begin position="1"/>
        <end position="90"/>
    </location>
</feature>
<name>FETP_AZOVD</name>
<comment type="function">
    <text evidence="1">Could be a mediator in iron transactions between iron acquisition and iron-requiring processes, such as synthesis and/or repair of Fe-S clusters in biosynthetic enzymes.</text>
</comment>
<comment type="similarity">
    <text evidence="1">Belongs to the Fe(2+)-trafficking protein family.</text>
</comment>
<organism>
    <name type="scientific">Azotobacter vinelandii (strain DJ / ATCC BAA-1303)</name>
    <dbReference type="NCBI Taxonomy" id="322710"/>
    <lineage>
        <taxon>Bacteria</taxon>
        <taxon>Pseudomonadati</taxon>
        <taxon>Pseudomonadota</taxon>
        <taxon>Gammaproteobacteria</taxon>
        <taxon>Pseudomonadales</taxon>
        <taxon>Pseudomonadaceae</taxon>
        <taxon>Azotobacter</taxon>
    </lineage>
</organism>
<accession>C1DJC2</accession>
<reference key="1">
    <citation type="journal article" date="2009" name="J. Bacteriol.">
        <title>Genome sequence of Azotobacter vinelandii, an obligate aerobe specialized to support diverse anaerobic metabolic processes.</title>
        <authorList>
            <person name="Setubal J.C."/>
            <person name="Dos Santos P."/>
            <person name="Goldman B.S."/>
            <person name="Ertesvaag H."/>
            <person name="Espin G."/>
            <person name="Rubio L.M."/>
            <person name="Valla S."/>
            <person name="Almeida N.F."/>
            <person name="Balasubramanian D."/>
            <person name="Cromes L."/>
            <person name="Curatti L."/>
            <person name="Du Z."/>
            <person name="Godsy E."/>
            <person name="Goodner B."/>
            <person name="Hellner-Burris K."/>
            <person name="Hernandez J.A."/>
            <person name="Houmiel K."/>
            <person name="Imperial J."/>
            <person name="Kennedy C."/>
            <person name="Larson T.J."/>
            <person name="Latreille P."/>
            <person name="Ligon L.S."/>
            <person name="Lu J."/>
            <person name="Maerk M."/>
            <person name="Miller N.M."/>
            <person name="Norton S."/>
            <person name="O'Carroll I.P."/>
            <person name="Paulsen I."/>
            <person name="Raulfs E.C."/>
            <person name="Roemer R."/>
            <person name="Rosser J."/>
            <person name="Segura D."/>
            <person name="Slater S."/>
            <person name="Stricklin S.L."/>
            <person name="Studholme D.J."/>
            <person name="Sun J."/>
            <person name="Viana C.J."/>
            <person name="Wallin E."/>
            <person name="Wang B."/>
            <person name="Wheeler C."/>
            <person name="Zhu H."/>
            <person name="Dean D.R."/>
            <person name="Dixon R."/>
            <person name="Wood D."/>
        </authorList>
    </citation>
    <scope>NUCLEOTIDE SEQUENCE [LARGE SCALE GENOMIC DNA]</scope>
    <source>
        <strain>DJ / ATCC BAA-1303</strain>
    </source>
</reference>
<proteinExistence type="inferred from homology"/>
<sequence>MTRTVHCRKYKEELPGLDRPPYPGPKGEDIYNNVSRQAWDEWQKHQTMLINERRLNMMNAEDRKFLQAEMEKFLSGEEYAQAEGYVQPKE</sequence>
<gene>
    <name type="ordered locus">Avin_04520</name>
</gene>
<keyword id="KW-0408">Iron</keyword>
<evidence type="ECO:0000255" key="1">
    <source>
        <dbReference type="HAMAP-Rule" id="MF_00686"/>
    </source>
</evidence>
<protein>
    <recommendedName>
        <fullName evidence="1">Probable Fe(2+)-trafficking protein</fullName>
    </recommendedName>
</protein>
<dbReference type="EMBL" id="CP001157">
    <property type="protein sequence ID" value="ACO76707.1"/>
    <property type="molecule type" value="Genomic_DNA"/>
</dbReference>
<dbReference type="RefSeq" id="WP_012699135.1">
    <property type="nucleotide sequence ID" value="NC_012560.1"/>
</dbReference>
<dbReference type="SMR" id="C1DJC2"/>
<dbReference type="STRING" id="322710.Avin_04520"/>
<dbReference type="EnsemblBacteria" id="ACO76707">
    <property type="protein sequence ID" value="ACO76707"/>
    <property type="gene ID" value="Avin_04520"/>
</dbReference>
<dbReference type="GeneID" id="88183883"/>
<dbReference type="KEGG" id="avn:Avin_04520"/>
<dbReference type="eggNOG" id="COG2924">
    <property type="taxonomic scope" value="Bacteria"/>
</dbReference>
<dbReference type="HOGENOM" id="CLU_170994_0_0_6"/>
<dbReference type="OrthoDB" id="9804318at2"/>
<dbReference type="Proteomes" id="UP000002424">
    <property type="component" value="Chromosome"/>
</dbReference>
<dbReference type="GO" id="GO:0005829">
    <property type="term" value="C:cytosol"/>
    <property type="evidence" value="ECO:0007669"/>
    <property type="project" value="TreeGrafter"/>
</dbReference>
<dbReference type="GO" id="GO:0005506">
    <property type="term" value="F:iron ion binding"/>
    <property type="evidence" value="ECO:0007669"/>
    <property type="project" value="UniProtKB-UniRule"/>
</dbReference>
<dbReference type="GO" id="GO:0034599">
    <property type="term" value="P:cellular response to oxidative stress"/>
    <property type="evidence" value="ECO:0007669"/>
    <property type="project" value="TreeGrafter"/>
</dbReference>
<dbReference type="FunFam" id="1.10.3880.10:FF:000001">
    <property type="entry name" value="Probable Fe(2+)-trafficking protein"/>
    <property type="match status" value="1"/>
</dbReference>
<dbReference type="Gene3D" id="1.10.3880.10">
    <property type="entry name" value="Fe(II) trafficking protein YggX"/>
    <property type="match status" value="1"/>
</dbReference>
<dbReference type="HAMAP" id="MF_00686">
    <property type="entry name" value="Fe_traffic_YggX"/>
    <property type="match status" value="1"/>
</dbReference>
<dbReference type="InterPro" id="IPR007457">
    <property type="entry name" value="Fe_traffick_prot_YggX"/>
</dbReference>
<dbReference type="InterPro" id="IPR036766">
    <property type="entry name" value="Fe_traffick_prot_YggX_sf"/>
</dbReference>
<dbReference type="NCBIfam" id="NF003817">
    <property type="entry name" value="PRK05408.1"/>
    <property type="match status" value="1"/>
</dbReference>
<dbReference type="PANTHER" id="PTHR36965">
    <property type="entry name" value="FE(2+)-TRAFFICKING PROTEIN-RELATED"/>
    <property type="match status" value="1"/>
</dbReference>
<dbReference type="PANTHER" id="PTHR36965:SF1">
    <property type="entry name" value="FE(2+)-TRAFFICKING PROTEIN-RELATED"/>
    <property type="match status" value="1"/>
</dbReference>
<dbReference type="Pfam" id="PF04362">
    <property type="entry name" value="Iron_traffic"/>
    <property type="match status" value="1"/>
</dbReference>
<dbReference type="PIRSF" id="PIRSF029827">
    <property type="entry name" value="Fe_traffic_YggX"/>
    <property type="match status" value="1"/>
</dbReference>
<dbReference type="SUPFAM" id="SSF111148">
    <property type="entry name" value="YggX-like"/>
    <property type="match status" value="1"/>
</dbReference>